<sequence>MADKSDLNALSGRFRGYYPVVIDVETAGFNAQSDALLEIAAVTLQMNKEGWLLPDETLHFHVEPFEGANLQPEALAFNGIDPTNPLRGAVSEHDALHAIFKAVRKGIKDKGCNRAIIVAHNANFDHSFVMAAAERASLKRNPFHPFATFDTAALSGLVLGQTVLAKACLAAGIPFDSSQAHSALYDTLQTAKLFCELVNRWKKLGGWPLPAAESG</sequence>
<evidence type="ECO:0000255" key="1">
    <source>
        <dbReference type="HAMAP-Rule" id="MF_00157"/>
    </source>
</evidence>
<keyword id="KW-0269">Exonuclease</keyword>
<keyword id="KW-0378">Hydrolase</keyword>
<keyword id="KW-0460">Magnesium</keyword>
<keyword id="KW-0479">Metal-binding</keyword>
<keyword id="KW-0540">Nuclease</keyword>
<keyword id="KW-1185">Reference proteome</keyword>
<keyword id="KW-0819">tRNA processing</keyword>
<feature type="chain" id="PRO_0000208985" description="Ribonuclease T">
    <location>
        <begin position="1"/>
        <end position="215"/>
    </location>
</feature>
<feature type="domain" description="Exonuclease" evidence="1">
    <location>
        <begin position="20"/>
        <end position="194"/>
    </location>
</feature>
<feature type="active site" description="Proton donor/acceptor" evidence="1">
    <location>
        <position position="181"/>
    </location>
</feature>
<feature type="binding site" evidence="1">
    <location>
        <position position="23"/>
    </location>
    <ligand>
        <name>Mg(2+)</name>
        <dbReference type="ChEBI" id="CHEBI:18420"/>
        <label>1</label>
        <note>catalytic</note>
    </ligand>
</feature>
<feature type="binding site" evidence="1">
    <location>
        <position position="23"/>
    </location>
    <ligand>
        <name>Mg(2+)</name>
        <dbReference type="ChEBI" id="CHEBI:18420"/>
        <label>2</label>
        <note>catalytic</note>
    </ligand>
</feature>
<feature type="binding site" evidence="1">
    <location>
        <position position="25"/>
    </location>
    <ligand>
        <name>Mg(2+)</name>
        <dbReference type="ChEBI" id="CHEBI:18420"/>
        <label>2</label>
        <note>catalytic</note>
    </ligand>
</feature>
<feature type="binding site" evidence="1">
    <location>
        <position position="181"/>
    </location>
    <ligand>
        <name>Mg(2+)</name>
        <dbReference type="ChEBI" id="CHEBI:18420"/>
        <label>2</label>
        <note>catalytic</note>
    </ligand>
</feature>
<feature type="binding site" evidence="1">
    <location>
        <position position="186"/>
    </location>
    <ligand>
        <name>Mg(2+)</name>
        <dbReference type="ChEBI" id="CHEBI:18420"/>
        <label>2</label>
        <note>catalytic</note>
    </ligand>
</feature>
<feature type="site" description="Important for substrate binding and specificity" evidence="1">
    <location>
        <position position="29"/>
    </location>
</feature>
<feature type="site" description="Important for substrate binding and specificity" evidence="1">
    <location>
        <position position="77"/>
    </location>
</feature>
<feature type="site" description="Important for substrate binding and specificity" evidence="1">
    <location>
        <position position="124"/>
    </location>
</feature>
<feature type="site" description="Important for substrate binding and specificity" evidence="1">
    <location>
        <position position="146"/>
    </location>
</feature>
<accession>Q8ZE08</accession>
<accession>Q0WEE0</accession>
<organism>
    <name type="scientific">Yersinia pestis</name>
    <dbReference type="NCBI Taxonomy" id="632"/>
    <lineage>
        <taxon>Bacteria</taxon>
        <taxon>Pseudomonadati</taxon>
        <taxon>Pseudomonadota</taxon>
        <taxon>Gammaproteobacteria</taxon>
        <taxon>Enterobacterales</taxon>
        <taxon>Yersiniaceae</taxon>
        <taxon>Yersinia</taxon>
    </lineage>
</organism>
<name>RNT_YERPE</name>
<protein>
    <recommendedName>
        <fullName evidence="1">Ribonuclease T</fullName>
        <ecNumber evidence="1">3.1.13.-</ecNumber>
    </recommendedName>
    <alternativeName>
        <fullName evidence="1">Exoribonuclease T</fullName>
        <shortName evidence="1">RNase T</shortName>
    </alternativeName>
</protein>
<proteinExistence type="inferred from homology"/>
<gene>
    <name evidence="1" type="primary">rnt</name>
    <name type="ordered locus">YPO2382</name>
    <name type="ordered locus">y1955</name>
    <name type="ordered locus">YP_2168</name>
</gene>
<comment type="function">
    <text evidence="1">Trims short 3' overhangs of a variety of RNA species, leaving a one or two nucleotide 3' overhang. Responsible for the end-turnover of tRNA: specifically removes the terminal AMP residue from uncharged tRNA (tRNA-C-C-A). Also appears to be involved in tRNA biosynthesis.</text>
</comment>
<comment type="cofactor">
    <cofactor evidence="1">
        <name>Mg(2+)</name>
        <dbReference type="ChEBI" id="CHEBI:18420"/>
    </cofactor>
    <text evidence="1">Binds two Mg(2+) per subunit. The active form of the enzyme binds two Mg(2+) ions in its active site. The first Mg(2+) forms only one salt bridge with the protein.</text>
</comment>
<comment type="subunit">
    <text evidence="1">Homodimer.</text>
</comment>
<comment type="similarity">
    <text evidence="1">Belongs to the RNase T family.</text>
</comment>
<reference key="1">
    <citation type="journal article" date="2001" name="Nature">
        <title>Genome sequence of Yersinia pestis, the causative agent of plague.</title>
        <authorList>
            <person name="Parkhill J."/>
            <person name="Wren B.W."/>
            <person name="Thomson N.R."/>
            <person name="Titball R.W."/>
            <person name="Holden M.T.G."/>
            <person name="Prentice M.B."/>
            <person name="Sebaihia M."/>
            <person name="James K.D."/>
            <person name="Churcher C.M."/>
            <person name="Mungall K.L."/>
            <person name="Baker S."/>
            <person name="Basham D."/>
            <person name="Bentley S.D."/>
            <person name="Brooks K."/>
            <person name="Cerdeno-Tarraga A.-M."/>
            <person name="Chillingworth T."/>
            <person name="Cronin A."/>
            <person name="Davies R.M."/>
            <person name="Davis P."/>
            <person name="Dougan G."/>
            <person name="Feltwell T."/>
            <person name="Hamlin N."/>
            <person name="Holroyd S."/>
            <person name="Jagels K."/>
            <person name="Karlyshev A.V."/>
            <person name="Leather S."/>
            <person name="Moule S."/>
            <person name="Oyston P.C.F."/>
            <person name="Quail M.A."/>
            <person name="Rutherford K.M."/>
            <person name="Simmonds M."/>
            <person name="Skelton J."/>
            <person name="Stevens K."/>
            <person name="Whitehead S."/>
            <person name="Barrell B.G."/>
        </authorList>
    </citation>
    <scope>NUCLEOTIDE SEQUENCE [LARGE SCALE GENOMIC DNA]</scope>
    <source>
        <strain>CO-92 / Biovar Orientalis</strain>
    </source>
</reference>
<reference key="2">
    <citation type="journal article" date="2002" name="J. Bacteriol.">
        <title>Genome sequence of Yersinia pestis KIM.</title>
        <authorList>
            <person name="Deng W."/>
            <person name="Burland V."/>
            <person name="Plunkett G. III"/>
            <person name="Boutin A."/>
            <person name="Mayhew G.F."/>
            <person name="Liss P."/>
            <person name="Perna N.T."/>
            <person name="Rose D.J."/>
            <person name="Mau B."/>
            <person name="Zhou S."/>
            <person name="Schwartz D.C."/>
            <person name="Fetherston J.D."/>
            <person name="Lindler L.E."/>
            <person name="Brubaker R.R."/>
            <person name="Plano G.V."/>
            <person name="Straley S.C."/>
            <person name="McDonough K.A."/>
            <person name="Nilles M.L."/>
            <person name="Matson J.S."/>
            <person name="Blattner F.R."/>
            <person name="Perry R.D."/>
        </authorList>
    </citation>
    <scope>NUCLEOTIDE SEQUENCE [LARGE SCALE GENOMIC DNA]</scope>
    <source>
        <strain>KIM10+ / Biovar Mediaevalis</strain>
    </source>
</reference>
<reference key="3">
    <citation type="journal article" date="2004" name="DNA Res.">
        <title>Complete genome sequence of Yersinia pestis strain 91001, an isolate avirulent to humans.</title>
        <authorList>
            <person name="Song Y."/>
            <person name="Tong Z."/>
            <person name="Wang J."/>
            <person name="Wang L."/>
            <person name="Guo Z."/>
            <person name="Han Y."/>
            <person name="Zhang J."/>
            <person name="Pei D."/>
            <person name="Zhou D."/>
            <person name="Qin H."/>
            <person name="Pang X."/>
            <person name="Han Y."/>
            <person name="Zhai J."/>
            <person name="Li M."/>
            <person name="Cui B."/>
            <person name="Qi Z."/>
            <person name="Jin L."/>
            <person name="Dai R."/>
            <person name="Chen F."/>
            <person name="Li S."/>
            <person name="Ye C."/>
            <person name="Du Z."/>
            <person name="Lin W."/>
            <person name="Wang J."/>
            <person name="Yu J."/>
            <person name="Yang H."/>
            <person name="Wang J."/>
            <person name="Huang P."/>
            <person name="Yang R."/>
        </authorList>
    </citation>
    <scope>NUCLEOTIDE SEQUENCE [LARGE SCALE GENOMIC DNA]</scope>
    <source>
        <strain>91001 / Biovar Mediaevalis</strain>
    </source>
</reference>
<dbReference type="EC" id="3.1.13.-" evidence="1"/>
<dbReference type="EMBL" id="AL590842">
    <property type="protein sequence ID" value="CAL21010.1"/>
    <property type="molecule type" value="Genomic_DNA"/>
</dbReference>
<dbReference type="EMBL" id="AE009952">
    <property type="protein sequence ID" value="AAM85521.1"/>
    <property type="molecule type" value="Genomic_DNA"/>
</dbReference>
<dbReference type="EMBL" id="AE017042">
    <property type="protein sequence ID" value="AAS62376.1"/>
    <property type="molecule type" value="Genomic_DNA"/>
</dbReference>
<dbReference type="PIR" id="AG0290">
    <property type="entry name" value="AG0290"/>
</dbReference>
<dbReference type="RefSeq" id="WP_002227904.1">
    <property type="nucleotide sequence ID" value="NZ_WUCM01000049.1"/>
</dbReference>
<dbReference type="RefSeq" id="YP_002347348.1">
    <property type="nucleotide sequence ID" value="NC_003143.1"/>
</dbReference>
<dbReference type="SMR" id="Q8ZE08"/>
<dbReference type="STRING" id="214092.YPO2382"/>
<dbReference type="PaxDb" id="214092-YPO2382"/>
<dbReference type="DNASU" id="1146902"/>
<dbReference type="EnsemblBacteria" id="AAS62376">
    <property type="protein sequence ID" value="AAS62376"/>
    <property type="gene ID" value="YP_2168"/>
</dbReference>
<dbReference type="GeneID" id="57976293"/>
<dbReference type="KEGG" id="ype:YPO2382"/>
<dbReference type="KEGG" id="ypj:CH55_454"/>
<dbReference type="KEGG" id="ypk:y1955"/>
<dbReference type="KEGG" id="ypl:CH46_2725"/>
<dbReference type="KEGG" id="ypm:YP_2168"/>
<dbReference type="KEGG" id="ypv:BZ15_1145"/>
<dbReference type="KEGG" id="ypw:CH59_4211"/>
<dbReference type="PATRIC" id="fig|214092.21.peg.2790"/>
<dbReference type="eggNOG" id="COG0847">
    <property type="taxonomic scope" value="Bacteria"/>
</dbReference>
<dbReference type="HOGENOM" id="CLU_082724_0_0_6"/>
<dbReference type="OMA" id="CYMVNHL"/>
<dbReference type="OrthoDB" id="9778264at2"/>
<dbReference type="Proteomes" id="UP000000815">
    <property type="component" value="Chromosome"/>
</dbReference>
<dbReference type="Proteomes" id="UP000001019">
    <property type="component" value="Chromosome"/>
</dbReference>
<dbReference type="Proteomes" id="UP000002490">
    <property type="component" value="Chromosome"/>
</dbReference>
<dbReference type="GO" id="GO:0005829">
    <property type="term" value="C:cytosol"/>
    <property type="evidence" value="ECO:0000318"/>
    <property type="project" value="GO_Central"/>
</dbReference>
<dbReference type="GO" id="GO:0008408">
    <property type="term" value="F:3'-5' exonuclease activity"/>
    <property type="evidence" value="ECO:0000318"/>
    <property type="project" value="GO_Central"/>
</dbReference>
<dbReference type="GO" id="GO:0000287">
    <property type="term" value="F:magnesium ion binding"/>
    <property type="evidence" value="ECO:0007669"/>
    <property type="project" value="UniProtKB-UniRule"/>
</dbReference>
<dbReference type="GO" id="GO:0003676">
    <property type="term" value="F:nucleic acid binding"/>
    <property type="evidence" value="ECO:0007669"/>
    <property type="project" value="InterPro"/>
</dbReference>
<dbReference type="GO" id="GO:0016896">
    <property type="term" value="F:RNA exonuclease activity, producing 5'-phosphomonoesters"/>
    <property type="evidence" value="ECO:0007669"/>
    <property type="project" value="UniProtKB-UniRule"/>
</dbReference>
<dbReference type="GO" id="GO:0045004">
    <property type="term" value="P:DNA replication proofreading"/>
    <property type="evidence" value="ECO:0000318"/>
    <property type="project" value="GO_Central"/>
</dbReference>
<dbReference type="GO" id="GO:0008033">
    <property type="term" value="P:tRNA processing"/>
    <property type="evidence" value="ECO:0007669"/>
    <property type="project" value="UniProtKB-KW"/>
</dbReference>
<dbReference type="CDD" id="cd06134">
    <property type="entry name" value="RNaseT"/>
    <property type="match status" value="1"/>
</dbReference>
<dbReference type="FunFam" id="3.30.420.10:FF:000009">
    <property type="entry name" value="Ribonuclease T"/>
    <property type="match status" value="1"/>
</dbReference>
<dbReference type="Gene3D" id="3.30.420.10">
    <property type="entry name" value="Ribonuclease H-like superfamily/Ribonuclease H"/>
    <property type="match status" value="1"/>
</dbReference>
<dbReference type="HAMAP" id="MF_00157">
    <property type="entry name" value="RNase_T"/>
    <property type="match status" value="1"/>
</dbReference>
<dbReference type="InterPro" id="IPR013520">
    <property type="entry name" value="Exonuclease_RNaseT/DNA_pol3"/>
</dbReference>
<dbReference type="InterPro" id="IPR005987">
    <property type="entry name" value="RNase_T"/>
</dbReference>
<dbReference type="InterPro" id="IPR012337">
    <property type="entry name" value="RNaseH-like_sf"/>
</dbReference>
<dbReference type="InterPro" id="IPR036397">
    <property type="entry name" value="RNaseH_sf"/>
</dbReference>
<dbReference type="NCBIfam" id="TIGR01298">
    <property type="entry name" value="RNaseT"/>
    <property type="match status" value="1"/>
</dbReference>
<dbReference type="PANTHER" id="PTHR30231">
    <property type="entry name" value="DNA POLYMERASE III SUBUNIT EPSILON"/>
    <property type="match status" value="1"/>
</dbReference>
<dbReference type="PANTHER" id="PTHR30231:SF2">
    <property type="entry name" value="RIBONUCLEASE T"/>
    <property type="match status" value="1"/>
</dbReference>
<dbReference type="Pfam" id="PF00929">
    <property type="entry name" value="RNase_T"/>
    <property type="match status" value="1"/>
</dbReference>
<dbReference type="SMART" id="SM00479">
    <property type="entry name" value="EXOIII"/>
    <property type="match status" value="1"/>
</dbReference>
<dbReference type="SUPFAM" id="SSF53098">
    <property type="entry name" value="Ribonuclease H-like"/>
    <property type="match status" value="1"/>
</dbReference>